<proteinExistence type="inferred from homology"/>
<gene>
    <name evidence="1" type="primary">hemL</name>
    <name type="ordered locus">SGR_4192</name>
</gene>
<evidence type="ECO:0000255" key="1">
    <source>
        <dbReference type="HAMAP-Rule" id="MF_00375"/>
    </source>
</evidence>
<sequence>MAYSYEAPVSQSLFDRASVVTPGGVNSPVRAFRAVGGTPRFMVSGTGPYLTDADGREYVDLVCSWGPMILGHSHPEVIAAVQEAVSRGTSFGTPGEGEVALAEEIVARIEPVEQVRLVSSGTEATMSAIRLARGFTGRAKVVKFAGCYHGHVDALLAAAGSGVATFGLPDTPGVTGATAGDTVVLPYNDLEAVRAAFAAHPGEIACVITEASPGNMGVVPPADGFNAGLKELCAANGALYISDEVMTGFRTSKAGWYGVDGVRPDLMTFGKVMGGGFPAAAFGGRGDVMAHLAPAGPVYQAGTLSGNPVATAAGLAQLRLLDDAAYARIDAVSAGLRSLVGEALTKEGVAHTVSAASNMFSVFFTDRPVRDYEDAKQQDVFRFTAFFHSMLAQGVYLPPSAFESWFVSTAHDERAVERVAAALPAAARAAAEATA</sequence>
<dbReference type="EC" id="5.4.3.8" evidence="1"/>
<dbReference type="EMBL" id="AP009493">
    <property type="protein sequence ID" value="BAG21021.1"/>
    <property type="molecule type" value="Genomic_DNA"/>
</dbReference>
<dbReference type="SMR" id="B1VTD1"/>
<dbReference type="KEGG" id="sgr:SGR_4192"/>
<dbReference type="eggNOG" id="COG0001">
    <property type="taxonomic scope" value="Bacteria"/>
</dbReference>
<dbReference type="HOGENOM" id="CLU_016922_1_5_11"/>
<dbReference type="UniPathway" id="UPA00251">
    <property type="reaction ID" value="UER00317"/>
</dbReference>
<dbReference type="Proteomes" id="UP000001685">
    <property type="component" value="Chromosome"/>
</dbReference>
<dbReference type="GO" id="GO:0005737">
    <property type="term" value="C:cytoplasm"/>
    <property type="evidence" value="ECO:0007669"/>
    <property type="project" value="UniProtKB-SubCell"/>
</dbReference>
<dbReference type="GO" id="GO:0042286">
    <property type="term" value="F:glutamate-1-semialdehyde 2,1-aminomutase activity"/>
    <property type="evidence" value="ECO:0007669"/>
    <property type="project" value="UniProtKB-UniRule"/>
</dbReference>
<dbReference type="GO" id="GO:0030170">
    <property type="term" value="F:pyridoxal phosphate binding"/>
    <property type="evidence" value="ECO:0007669"/>
    <property type="project" value="InterPro"/>
</dbReference>
<dbReference type="GO" id="GO:0008483">
    <property type="term" value="F:transaminase activity"/>
    <property type="evidence" value="ECO:0007669"/>
    <property type="project" value="InterPro"/>
</dbReference>
<dbReference type="GO" id="GO:0006782">
    <property type="term" value="P:protoporphyrinogen IX biosynthetic process"/>
    <property type="evidence" value="ECO:0007669"/>
    <property type="project" value="UniProtKB-UniRule"/>
</dbReference>
<dbReference type="CDD" id="cd00610">
    <property type="entry name" value="OAT_like"/>
    <property type="match status" value="1"/>
</dbReference>
<dbReference type="FunFam" id="3.40.640.10:FF:000021">
    <property type="entry name" value="Glutamate-1-semialdehyde 2,1-aminomutase"/>
    <property type="match status" value="1"/>
</dbReference>
<dbReference type="Gene3D" id="3.90.1150.10">
    <property type="entry name" value="Aspartate Aminotransferase, domain 1"/>
    <property type="match status" value="1"/>
</dbReference>
<dbReference type="Gene3D" id="3.40.640.10">
    <property type="entry name" value="Type I PLP-dependent aspartate aminotransferase-like (Major domain)"/>
    <property type="match status" value="1"/>
</dbReference>
<dbReference type="HAMAP" id="MF_00375">
    <property type="entry name" value="HemL_aminotrans_3"/>
    <property type="match status" value="1"/>
</dbReference>
<dbReference type="InterPro" id="IPR004639">
    <property type="entry name" value="4pyrrol_synth_GluAld_NH2Trfase"/>
</dbReference>
<dbReference type="InterPro" id="IPR005814">
    <property type="entry name" value="Aminotrans_3"/>
</dbReference>
<dbReference type="InterPro" id="IPR049704">
    <property type="entry name" value="Aminotrans_3_PPA_site"/>
</dbReference>
<dbReference type="InterPro" id="IPR015424">
    <property type="entry name" value="PyrdxlP-dep_Trfase"/>
</dbReference>
<dbReference type="InterPro" id="IPR015421">
    <property type="entry name" value="PyrdxlP-dep_Trfase_major"/>
</dbReference>
<dbReference type="InterPro" id="IPR015422">
    <property type="entry name" value="PyrdxlP-dep_Trfase_small"/>
</dbReference>
<dbReference type="NCBIfam" id="TIGR00713">
    <property type="entry name" value="hemL"/>
    <property type="match status" value="1"/>
</dbReference>
<dbReference type="NCBIfam" id="NF000818">
    <property type="entry name" value="PRK00062.1"/>
    <property type="match status" value="1"/>
</dbReference>
<dbReference type="PANTHER" id="PTHR43713">
    <property type="entry name" value="GLUTAMATE-1-SEMIALDEHYDE 2,1-AMINOMUTASE"/>
    <property type="match status" value="1"/>
</dbReference>
<dbReference type="PANTHER" id="PTHR43713:SF3">
    <property type="entry name" value="GLUTAMATE-1-SEMIALDEHYDE 2,1-AMINOMUTASE 1, CHLOROPLASTIC-RELATED"/>
    <property type="match status" value="1"/>
</dbReference>
<dbReference type="Pfam" id="PF00202">
    <property type="entry name" value="Aminotran_3"/>
    <property type="match status" value="1"/>
</dbReference>
<dbReference type="SUPFAM" id="SSF53383">
    <property type="entry name" value="PLP-dependent transferases"/>
    <property type="match status" value="1"/>
</dbReference>
<dbReference type="PROSITE" id="PS00600">
    <property type="entry name" value="AA_TRANSFER_CLASS_3"/>
    <property type="match status" value="1"/>
</dbReference>
<name>GSA_STRGG</name>
<feature type="chain" id="PRO_1000121924" description="Glutamate-1-semialdehyde 2,1-aminomutase">
    <location>
        <begin position="1"/>
        <end position="435"/>
    </location>
</feature>
<feature type="modified residue" description="N6-(pyridoxal phosphate)lysine" evidence="1">
    <location>
        <position position="271"/>
    </location>
</feature>
<keyword id="KW-0963">Cytoplasm</keyword>
<keyword id="KW-0413">Isomerase</keyword>
<keyword id="KW-0627">Porphyrin biosynthesis</keyword>
<keyword id="KW-0663">Pyridoxal phosphate</keyword>
<accession>B1VTD1</accession>
<comment type="catalytic activity">
    <reaction evidence="1">
        <text>(S)-4-amino-5-oxopentanoate = 5-aminolevulinate</text>
        <dbReference type="Rhea" id="RHEA:14265"/>
        <dbReference type="ChEBI" id="CHEBI:57501"/>
        <dbReference type="ChEBI" id="CHEBI:356416"/>
        <dbReference type="EC" id="5.4.3.8"/>
    </reaction>
</comment>
<comment type="cofactor">
    <cofactor evidence="1">
        <name>pyridoxal 5'-phosphate</name>
        <dbReference type="ChEBI" id="CHEBI:597326"/>
    </cofactor>
</comment>
<comment type="pathway">
    <text evidence="1">Porphyrin-containing compound metabolism; protoporphyrin-IX biosynthesis; 5-aminolevulinate from L-glutamyl-tRNA(Glu): step 2/2.</text>
</comment>
<comment type="subunit">
    <text evidence="1">Homodimer.</text>
</comment>
<comment type="subcellular location">
    <subcellularLocation>
        <location evidence="1">Cytoplasm</location>
    </subcellularLocation>
</comment>
<comment type="similarity">
    <text evidence="1">Belongs to the class-III pyridoxal-phosphate-dependent aminotransferase family. HemL subfamily.</text>
</comment>
<reference key="1">
    <citation type="journal article" date="2008" name="J. Bacteriol.">
        <title>Genome sequence of the streptomycin-producing microorganism Streptomyces griseus IFO 13350.</title>
        <authorList>
            <person name="Ohnishi Y."/>
            <person name="Ishikawa J."/>
            <person name="Hara H."/>
            <person name="Suzuki H."/>
            <person name="Ikenoya M."/>
            <person name="Ikeda H."/>
            <person name="Yamashita A."/>
            <person name="Hattori M."/>
            <person name="Horinouchi S."/>
        </authorList>
    </citation>
    <scope>NUCLEOTIDE SEQUENCE [LARGE SCALE GENOMIC DNA]</scope>
    <source>
        <strain>JCM 4626 / CBS 651.72 / NBRC 13350 / KCC S-0626 / ISP 5235</strain>
    </source>
</reference>
<protein>
    <recommendedName>
        <fullName evidence="1">Glutamate-1-semialdehyde 2,1-aminomutase</fullName>
        <shortName evidence="1">GSA</shortName>
        <ecNumber evidence="1">5.4.3.8</ecNumber>
    </recommendedName>
    <alternativeName>
        <fullName evidence="1">Glutamate-1-semialdehyde aminotransferase</fullName>
        <shortName evidence="1">GSA-AT</shortName>
    </alternativeName>
</protein>
<organism>
    <name type="scientific">Streptomyces griseus subsp. griseus (strain JCM 4626 / CBS 651.72 / NBRC 13350 / KCC S-0626 / ISP 5235)</name>
    <dbReference type="NCBI Taxonomy" id="455632"/>
    <lineage>
        <taxon>Bacteria</taxon>
        <taxon>Bacillati</taxon>
        <taxon>Actinomycetota</taxon>
        <taxon>Actinomycetes</taxon>
        <taxon>Kitasatosporales</taxon>
        <taxon>Streptomycetaceae</taxon>
        <taxon>Streptomyces</taxon>
    </lineage>
</organism>